<accession>A5U9U1</accession>
<proteinExistence type="inferred from homology"/>
<comment type="function">
    <text evidence="1">Hydrolyzes diadenosine 5',5'''-P1,P4-tetraphosphate to yield ADP.</text>
</comment>
<comment type="catalytic activity">
    <reaction evidence="1">
        <text>P(1),P(4)-bis(5'-adenosyl) tetraphosphate + H2O = 2 ADP + 2 H(+)</text>
        <dbReference type="Rhea" id="RHEA:24252"/>
        <dbReference type="ChEBI" id="CHEBI:15377"/>
        <dbReference type="ChEBI" id="CHEBI:15378"/>
        <dbReference type="ChEBI" id="CHEBI:58141"/>
        <dbReference type="ChEBI" id="CHEBI:456216"/>
        <dbReference type="EC" id="3.6.1.41"/>
    </reaction>
</comment>
<comment type="similarity">
    <text evidence="1">Belongs to the Ap4A hydrolase family.</text>
</comment>
<sequence length="275" mass="31897">MATYFVGDLQGCYDELQLLLERVDFNPTQDKLYLVGDLVARGDKSLECLRFVKSLGNAAQTVLGNHDLHLIATALDIKKVKPRDRVDAIFNAPDFDEQIHWLRHQPLLVHSEELNFLMSHAGISPDWDLKTAKSCAAEVEQILQHGDFHYLIENMYSEQPDRWSPDLQGLARHRYIINAFTRMRFCYLDHRFDFACKSPLKDAPAELTPWFNLDNPLYKQIPIVFGHWASLVDEPTPKGIYALDTGCVWNNRMTMLRWEDKQFFTQSAVKNYSDF</sequence>
<dbReference type="EC" id="3.6.1.41" evidence="1"/>
<dbReference type="EMBL" id="CP000671">
    <property type="protein sequence ID" value="ABQ97542.1"/>
    <property type="molecule type" value="Genomic_DNA"/>
</dbReference>
<dbReference type="SMR" id="A5U9U1"/>
<dbReference type="KEGG" id="hip:CGSHiEE_00220"/>
<dbReference type="HOGENOM" id="CLU_056184_2_0_6"/>
<dbReference type="GO" id="GO:0008803">
    <property type="term" value="F:bis(5'-nucleosyl)-tetraphosphatase (symmetrical) activity"/>
    <property type="evidence" value="ECO:0007669"/>
    <property type="project" value="UniProtKB-UniRule"/>
</dbReference>
<dbReference type="CDD" id="cd07422">
    <property type="entry name" value="MPP_ApaH"/>
    <property type="match status" value="1"/>
</dbReference>
<dbReference type="Gene3D" id="3.60.21.10">
    <property type="match status" value="1"/>
</dbReference>
<dbReference type="HAMAP" id="MF_00199">
    <property type="entry name" value="ApaH"/>
    <property type="match status" value="1"/>
</dbReference>
<dbReference type="InterPro" id="IPR004617">
    <property type="entry name" value="ApaH"/>
</dbReference>
<dbReference type="InterPro" id="IPR004843">
    <property type="entry name" value="Calcineurin-like_PHP_ApaH"/>
</dbReference>
<dbReference type="InterPro" id="IPR029052">
    <property type="entry name" value="Metallo-depent_PP-like"/>
</dbReference>
<dbReference type="NCBIfam" id="TIGR00668">
    <property type="entry name" value="apaH"/>
    <property type="match status" value="1"/>
</dbReference>
<dbReference type="NCBIfam" id="NF001204">
    <property type="entry name" value="PRK00166.1"/>
    <property type="match status" value="1"/>
</dbReference>
<dbReference type="PANTHER" id="PTHR40942">
    <property type="match status" value="1"/>
</dbReference>
<dbReference type="PANTHER" id="PTHR40942:SF4">
    <property type="entry name" value="CYTOCHROME C5"/>
    <property type="match status" value="1"/>
</dbReference>
<dbReference type="Pfam" id="PF00149">
    <property type="entry name" value="Metallophos"/>
    <property type="match status" value="1"/>
</dbReference>
<dbReference type="PIRSF" id="PIRSF000903">
    <property type="entry name" value="B5n-ttraPtase_sm"/>
    <property type="match status" value="1"/>
</dbReference>
<dbReference type="SUPFAM" id="SSF56300">
    <property type="entry name" value="Metallo-dependent phosphatases"/>
    <property type="match status" value="1"/>
</dbReference>
<protein>
    <recommendedName>
        <fullName evidence="1">Bis(5'-nucleosyl)-tetraphosphatase, symmetrical</fullName>
        <ecNumber evidence="1">3.6.1.41</ecNumber>
    </recommendedName>
    <alternativeName>
        <fullName evidence="1">Ap4A hydrolase</fullName>
    </alternativeName>
    <alternativeName>
        <fullName evidence="1">Diadenosine 5',5'''-P1,P4-tetraphosphate pyrophosphohydrolase</fullName>
    </alternativeName>
    <alternativeName>
        <fullName evidence="1">Diadenosine tetraphosphatase</fullName>
    </alternativeName>
</protein>
<organism>
    <name type="scientific">Haemophilus influenzae (strain PittEE)</name>
    <dbReference type="NCBI Taxonomy" id="374930"/>
    <lineage>
        <taxon>Bacteria</taxon>
        <taxon>Pseudomonadati</taxon>
        <taxon>Pseudomonadota</taxon>
        <taxon>Gammaproteobacteria</taxon>
        <taxon>Pasteurellales</taxon>
        <taxon>Pasteurellaceae</taxon>
        <taxon>Haemophilus</taxon>
    </lineage>
</organism>
<gene>
    <name evidence="1" type="primary">apaH</name>
    <name type="ordered locus">CGSHiEE_00220</name>
</gene>
<name>APAH_HAEIE</name>
<evidence type="ECO:0000255" key="1">
    <source>
        <dbReference type="HAMAP-Rule" id="MF_00199"/>
    </source>
</evidence>
<feature type="chain" id="PRO_1000012062" description="Bis(5'-nucleosyl)-tetraphosphatase, symmetrical">
    <location>
        <begin position="1"/>
        <end position="275"/>
    </location>
</feature>
<keyword id="KW-0378">Hydrolase</keyword>
<reference key="1">
    <citation type="journal article" date="2007" name="Genome Biol.">
        <title>Characterization and modeling of the Haemophilus influenzae core and supragenomes based on the complete genomic sequences of Rd and 12 clinical nontypeable strains.</title>
        <authorList>
            <person name="Hogg J.S."/>
            <person name="Hu F.Z."/>
            <person name="Janto B."/>
            <person name="Boissy R."/>
            <person name="Hayes J."/>
            <person name="Keefe R."/>
            <person name="Post J.C."/>
            <person name="Ehrlich G.D."/>
        </authorList>
    </citation>
    <scope>NUCLEOTIDE SEQUENCE [LARGE SCALE GENOMIC DNA]</scope>
    <source>
        <strain>PittEE</strain>
    </source>
</reference>